<organism>
    <name type="scientific">Illicium oligandrum</name>
    <name type="common">Star anise</name>
    <dbReference type="NCBI Taxonomy" id="145286"/>
    <lineage>
        <taxon>Eukaryota</taxon>
        <taxon>Viridiplantae</taxon>
        <taxon>Streptophyta</taxon>
        <taxon>Embryophyta</taxon>
        <taxon>Tracheophyta</taxon>
        <taxon>Spermatophyta</taxon>
        <taxon>Magnoliopsida</taxon>
        <taxon>Austrobaileyales</taxon>
        <taxon>Schisandraceae</taxon>
        <taxon>Illicium</taxon>
    </lineage>
</organism>
<feature type="chain" id="PRO_0000355883" description="Large ribosomal subunit protein uL14c">
    <location>
        <begin position="1"/>
        <end position="122"/>
    </location>
</feature>
<gene>
    <name evidence="1" type="primary">rpl14</name>
</gene>
<proteinExistence type="inferred from homology"/>
<evidence type="ECO:0000255" key="1">
    <source>
        <dbReference type="HAMAP-Rule" id="MF_01367"/>
    </source>
</evidence>
<evidence type="ECO:0000305" key="2"/>
<accession>A6MMY1</accession>
<sequence length="122" mass="13558">MIQPQTHLNVADNSGARELMCIRIIGASNHRYAHIGDVIVAVIKEAVPNMPLERSEVIRAVIVRTCKELKRDNGMIIRYDDNAAVVIDQEGNPKGTRVFGAIARELRQLNFTKIVSLAPEVL</sequence>
<dbReference type="EMBL" id="EF380354">
    <property type="protein sequence ID" value="ABQ52555.1"/>
    <property type="molecule type" value="Genomic_DNA"/>
</dbReference>
<dbReference type="RefSeq" id="YP_001294307.1">
    <property type="nucleotide sequence ID" value="NC_009600.1"/>
</dbReference>
<dbReference type="SMR" id="A6MMY1"/>
<dbReference type="GeneID" id="5236753"/>
<dbReference type="GO" id="GO:0009507">
    <property type="term" value="C:chloroplast"/>
    <property type="evidence" value="ECO:0007669"/>
    <property type="project" value="UniProtKB-SubCell"/>
</dbReference>
<dbReference type="GO" id="GO:0022625">
    <property type="term" value="C:cytosolic large ribosomal subunit"/>
    <property type="evidence" value="ECO:0007669"/>
    <property type="project" value="TreeGrafter"/>
</dbReference>
<dbReference type="GO" id="GO:0070180">
    <property type="term" value="F:large ribosomal subunit rRNA binding"/>
    <property type="evidence" value="ECO:0007669"/>
    <property type="project" value="TreeGrafter"/>
</dbReference>
<dbReference type="GO" id="GO:0003735">
    <property type="term" value="F:structural constituent of ribosome"/>
    <property type="evidence" value="ECO:0007669"/>
    <property type="project" value="InterPro"/>
</dbReference>
<dbReference type="GO" id="GO:0006412">
    <property type="term" value="P:translation"/>
    <property type="evidence" value="ECO:0007669"/>
    <property type="project" value="UniProtKB-UniRule"/>
</dbReference>
<dbReference type="CDD" id="cd00337">
    <property type="entry name" value="Ribosomal_uL14"/>
    <property type="match status" value="1"/>
</dbReference>
<dbReference type="FunFam" id="2.40.150.20:FF:000002">
    <property type="entry name" value="50S ribosomal protein L14, chloroplastic"/>
    <property type="match status" value="1"/>
</dbReference>
<dbReference type="Gene3D" id="2.40.150.20">
    <property type="entry name" value="Ribosomal protein L14"/>
    <property type="match status" value="1"/>
</dbReference>
<dbReference type="HAMAP" id="MF_01367">
    <property type="entry name" value="Ribosomal_uL14"/>
    <property type="match status" value="1"/>
</dbReference>
<dbReference type="InterPro" id="IPR000218">
    <property type="entry name" value="Ribosomal_uL14"/>
</dbReference>
<dbReference type="InterPro" id="IPR005745">
    <property type="entry name" value="Ribosomal_uL14_bac-type"/>
</dbReference>
<dbReference type="InterPro" id="IPR019972">
    <property type="entry name" value="Ribosomal_uL14_CS"/>
</dbReference>
<dbReference type="InterPro" id="IPR036853">
    <property type="entry name" value="Ribosomal_uL14_sf"/>
</dbReference>
<dbReference type="NCBIfam" id="TIGR01067">
    <property type="entry name" value="rplN_bact"/>
    <property type="match status" value="1"/>
</dbReference>
<dbReference type="PANTHER" id="PTHR11761">
    <property type="entry name" value="50S/60S RIBOSOMAL PROTEIN L14/L23"/>
    <property type="match status" value="1"/>
</dbReference>
<dbReference type="PANTHER" id="PTHR11761:SF3">
    <property type="entry name" value="LARGE RIBOSOMAL SUBUNIT PROTEIN UL14M"/>
    <property type="match status" value="1"/>
</dbReference>
<dbReference type="Pfam" id="PF00238">
    <property type="entry name" value="Ribosomal_L14"/>
    <property type="match status" value="1"/>
</dbReference>
<dbReference type="SMART" id="SM01374">
    <property type="entry name" value="Ribosomal_L14"/>
    <property type="match status" value="1"/>
</dbReference>
<dbReference type="SUPFAM" id="SSF50193">
    <property type="entry name" value="Ribosomal protein L14"/>
    <property type="match status" value="1"/>
</dbReference>
<dbReference type="PROSITE" id="PS00049">
    <property type="entry name" value="RIBOSOMAL_L14"/>
    <property type="match status" value="1"/>
</dbReference>
<name>RK14_ILLOL</name>
<keyword id="KW-0150">Chloroplast</keyword>
<keyword id="KW-0934">Plastid</keyword>
<keyword id="KW-0687">Ribonucleoprotein</keyword>
<keyword id="KW-0689">Ribosomal protein</keyword>
<keyword id="KW-0694">RNA-binding</keyword>
<keyword id="KW-0699">rRNA-binding</keyword>
<reference key="1">
    <citation type="journal article" date="2007" name="Mol. Phylogenet. Evol.">
        <title>Phylogenetic and evolutionary implications of complete chloroplast genome sequences of four early-diverging angiosperms: Buxus (Buxaceae), Chloranthus (Chloranthaceae), Dioscorea (Dioscoreaceae), and Illicium (Schisandraceae).</title>
        <authorList>
            <person name="Hansen D.R."/>
            <person name="Dastidar S.G."/>
            <person name="Cai Z."/>
            <person name="Penaflor C."/>
            <person name="Kuehl J.V."/>
            <person name="Boore J.L."/>
            <person name="Jansen R.K."/>
        </authorList>
    </citation>
    <scope>NUCLEOTIDE SEQUENCE [LARGE SCALE GENOMIC DNA]</scope>
</reference>
<comment type="function">
    <text evidence="1">Binds to 23S rRNA.</text>
</comment>
<comment type="subunit">
    <text evidence="1">Part of the 50S ribosomal subunit.</text>
</comment>
<comment type="subcellular location">
    <subcellularLocation>
        <location>Plastid</location>
        <location>Chloroplast</location>
    </subcellularLocation>
</comment>
<comment type="similarity">
    <text evidence="1">Belongs to the universal ribosomal protein uL14 family.</text>
</comment>
<protein>
    <recommendedName>
        <fullName evidence="1">Large ribosomal subunit protein uL14c</fullName>
    </recommendedName>
    <alternativeName>
        <fullName evidence="2">50S ribosomal protein L14, chloroplastic</fullName>
    </alternativeName>
</protein>
<geneLocation type="chloroplast"/>